<organismHost>
    <name type="scientific">Homo sapiens</name>
    <name type="common">Human</name>
    <dbReference type="NCBI Taxonomy" id="9606"/>
</organismHost>
<name>Y172_ADE02</name>
<reference key="1">
    <citation type="journal article" date="1982" name="J. Biol. Chem.">
        <title>Nucleotide sequences from the adenovirus-2 genome.</title>
        <authorList>
            <person name="Gingeras T.R."/>
            <person name="Sciaky D."/>
            <person name="Gelinas R.E."/>
            <person name="Bing-Dong J."/>
            <person name="Yen C.E."/>
            <person name="Kelly M.M."/>
            <person name="Bullock P.A."/>
            <person name="Parsons B.L."/>
            <person name="O'Neill K.E."/>
            <person name="Roberts R.J."/>
        </authorList>
    </citation>
    <scope>NUCLEOTIDE SEQUENCE [GENOMIC DNA]</scope>
</reference>
<accession>P03285</accession>
<feature type="chain" id="PRO_0000221926" description="Uncharacterized protein D-172">
    <location>
        <begin position="1"/>
        <end position="172"/>
    </location>
</feature>
<feature type="region of interest" description="Disordered" evidence="1">
    <location>
        <begin position="147"/>
        <end position="172"/>
    </location>
</feature>
<feature type="compositionally biased region" description="Gly residues" evidence="1">
    <location>
        <begin position="147"/>
        <end position="159"/>
    </location>
</feature>
<dbReference type="EMBL" id="J01917">
    <property type="status" value="NOT_ANNOTATED_CDS"/>
    <property type="molecule type" value="Genomic_DNA"/>
</dbReference>
<dbReference type="PIR" id="A03857">
    <property type="entry name" value="A03857"/>
</dbReference>
<dbReference type="Proteomes" id="UP000008167">
    <property type="component" value="Segment"/>
</dbReference>
<sequence length="172" mass="18123">MRSDVTKISPRRIIYPLSPAPFNTPCKLNIISPFIKLTSTHSANKGVNHTRNHRFTPYGLGRLQLKSKGCPDSLSKSSIHSTAWRRPPTLTATGLMGHSGTTGCISGGVLEGPESQLSVLLLHSLDTGDVGRLRIAGTNLGRRVGLAGSGSGSGSGSGSDTGPFKKSQYKIL</sequence>
<proteinExistence type="predicted"/>
<organism>
    <name type="scientific">Human adenovirus C serotype 2</name>
    <name type="common">HAdV-2</name>
    <name type="synonym">Human adenovirus 2</name>
    <dbReference type="NCBI Taxonomy" id="10515"/>
    <lineage>
        <taxon>Viruses</taxon>
        <taxon>Varidnaviria</taxon>
        <taxon>Bamfordvirae</taxon>
        <taxon>Preplasmiviricota</taxon>
        <taxon>Tectiliviricetes</taxon>
        <taxon>Rowavirales</taxon>
        <taxon>Adenoviridae</taxon>
        <taxon>Mastadenovirus</taxon>
        <taxon>Human mastadenovirus C</taxon>
    </lineage>
</organism>
<protein>
    <recommendedName>
        <fullName>Uncharacterized protein D-172</fullName>
    </recommendedName>
</protein>
<keyword id="KW-1185">Reference proteome</keyword>
<evidence type="ECO:0000256" key="1">
    <source>
        <dbReference type="SAM" id="MobiDB-lite"/>
    </source>
</evidence>